<proteinExistence type="inferred from homology"/>
<name>GATA_COXB2</name>
<keyword id="KW-0067">ATP-binding</keyword>
<keyword id="KW-0436">Ligase</keyword>
<keyword id="KW-0547">Nucleotide-binding</keyword>
<keyword id="KW-0648">Protein biosynthesis</keyword>
<accession>B6IZ25</accession>
<feature type="chain" id="PRO_1000095128" description="Glutamyl-tRNA(Gln) amidotransferase subunit A">
    <location>
        <begin position="1"/>
        <end position="483"/>
    </location>
</feature>
<feature type="active site" description="Charge relay system" evidence="1">
    <location>
        <position position="76"/>
    </location>
</feature>
<feature type="active site" description="Charge relay system" evidence="1">
    <location>
        <position position="151"/>
    </location>
</feature>
<feature type="active site" description="Acyl-ester intermediate" evidence="1">
    <location>
        <position position="175"/>
    </location>
</feature>
<sequence>MHQKTIAELKQDLRDKTISSVELTQHFLDRIKTINPTLNSFISITEEYALTQAKAADARLAKGEATSLTGIPIAQKDIFCTKDIKTSCGSKMLDNFIAPYDATVVEQLNKAGAILIGKTNMDEFAMGSSNENSYFGAVKNPWDLERVPGGSSGGSAAAVAARLVPGATGTDTGGSIRQPAALCGITGLKPTYGRVSRYGMIAFASSLDQAGPMAQTAEDAALLLNALAGHDAKDSTSINKNVPDYTATLTTSLEGLKVGLPKEYFGEGLNSSIAESIETVKKTLEKMGATFIEIQLPHTDFAAPAYYVLAPAECSSNLARYDGVRYGYRCDKPVDLDDLYKRSRTEGFGSEVKRRIMIGTYVLSAGYYDAYYLKAQKIRRLIRDDFMKAFETVDVILTPATPTPAFKLNEKIADPVAMYLSDVYTIAVNLAGLPAIAFPAGFMDQLPIGAQLIGNYFEEARLLNITHRYQQETDWHKQSPKLR</sequence>
<comment type="function">
    <text evidence="1">Allows the formation of correctly charged Gln-tRNA(Gln) through the transamidation of misacylated Glu-tRNA(Gln) in organisms which lack glutaminyl-tRNA synthetase. The reaction takes place in the presence of glutamine and ATP through an activated gamma-phospho-Glu-tRNA(Gln).</text>
</comment>
<comment type="catalytic activity">
    <reaction evidence="1">
        <text>L-glutamyl-tRNA(Gln) + L-glutamine + ATP + H2O = L-glutaminyl-tRNA(Gln) + L-glutamate + ADP + phosphate + H(+)</text>
        <dbReference type="Rhea" id="RHEA:17521"/>
        <dbReference type="Rhea" id="RHEA-COMP:9681"/>
        <dbReference type="Rhea" id="RHEA-COMP:9684"/>
        <dbReference type="ChEBI" id="CHEBI:15377"/>
        <dbReference type="ChEBI" id="CHEBI:15378"/>
        <dbReference type="ChEBI" id="CHEBI:29985"/>
        <dbReference type="ChEBI" id="CHEBI:30616"/>
        <dbReference type="ChEBI" id="CHEBI:43474"/>
        <dbReference type="ChEBI" id="CHEBI:58359"/>
        <dbReference type="ChEBI" id="CHEBI:78520"/>
        <dbReference type="ChEBI" id="CHEBI:78521"/>
        <dbReference type="ChEBI" id="CHEBI:456216"/>
        <dbReference type="EC" id="6.3.5.7"/>
    </reaction>
</comment>
<comment type="subunit">
    <text evidence="1">Heterotrimer of A, B and C subunits.</text>
</comment>
<comment type="similarity">
    <text evidence="1">Belongs to the amidase family. GatA subfamily.</text>
</comment>
<dbReference type="EC" id="6.3.5.7" evidence="1"/>
<dbReference type="EMBL" id="CP001019">
    <property type="protein sequence ID" value="ACJ17953.1"/>
    <property type="molecule type" value="Genomic_DNA"/>
</dbReference>
<dbReference type="RefSeq" id="WP_005772005.1">
    <property type="nucleotide sequence ID" value="NC_011527.1"/>
</dbReference>
<dbReference type="SMR" id="B6IZ25"/>
<dbReference type="KEGG" id="cbg:CbuG_0534"/>
<dbReference type="HOGENOM" id="CLU_009600_0_3_6"/>
<dbReference type="GO" id="GO:0030956">
    <property type="term" value="C:glutamyl-tRNA(Gln) amidotransferase complex"/>
    <property type="evidence" value="ECO:0007669"/>
    <property type="project" value="InterPro"/>
</dbReference>
<dbReference type="GO" id="GO:0005524">
    <property type="term" value="F:ATP binding"/>
    <property type="evidence" value="ECO:0007669"/>
    <property type="project" value="UniProtKB-KW"/>
</dbReference>
<dbReference type="GO" id="GO:0050567">
    <property type="term" value="F:glutaminyl-tRNA synthase (glutamine-hydrolyzing) activity"/>
    <property type="evidence" value="ECO:0007669"/>
    <property type="project" value="UniProtKB-UniRule"/>
</dbReference>
<dbReference type="GO" id="GO:0006412">
    <property type="term" value="P:translation"/>
    <property type="evidence" value="ECO:0007669"/>
    <property type="project" value="UniProtKB-UniRule"/>
</dbReference>
<dbReference type="Gene3D" id="3.90.1300.10">
    <property type="entry name" value="Amidase signature (AS) domain"/>
    <property type="match status" value="1"/>
</dbReference>
<dbReference type="HAMAP" id="MF_00120">
    <property type="entry name" value="GatA"/>
    <property type="match status" value="1"/>
</dbReference>
<dbReference type="InterPro" id="IPR000120">
    <property type="entry name" value="Amidase"/>
</dbReference>
<dbReference type="InterPro" id="IPR020556">
    <property type="entry name" value="Amidase_CS"/>
</dbReference>
<dbReference type="InterPro" id="IPR023631">
    <property type="entry name" value="Amidase_dom"/>
</dbReference>
<dbReference type="InterPro" id="IPR036928">
    <property type="entry name" value="AS_sf"/>
</dbReference>
<dbReference type="InterPro" id="IPR004412">
    <property type="entry name" value="GatA"/>
</dbReference>
<dbReference type="NCBIfam" id="TIGR00132">
    <property type="entry name" value="gatA"/>
    <property type="match status" value="1"/>
</dbReference>
<dbReference type="PANTHER" id="PTHR11895:SF151">
    <property type="entry name" value="GLUTAMYL-TRNA(GLN) AMIDOTRANSFERASE SUBUNIT A"/>
    <property type="match status" value="1"/>
</dbReference>
<dbReference type="PANTHER" id="PTHR11895">
    <property type="entry name" value="TRANSAMIDASE"/>
    <property type="match status" value="1"/>
</dbReference>
<dbReference type="Pfam" id="PF01425">
    <property type="entry name" value="Amidase"/>
    <property type="match status" value="1"/>
</dbReference>
<dbReference type="SUPFAM" id="SSF75304">
    <property type="entry name" value="Amidase signature (AS) enzymes"/>
    <property type="match status" value="1"/>
</dbReference>
<dbReference type="PROSITE" id="PS00571">
    <property type="entry name" value="AMIDASES"/>
    <property type="match status" value="1"/>
</dbReference>
<organism>
    <name type="scientific">Coxiella burnetii (strain CbuG_Q212)</name>
    <name type="common">Coxiella burnetii (strain Q212)</name>
    <dbReference type="NCBI Taxonomy" id="434923"/>
    <lineage>
        <taxon>Bacteria</taxon>
        <taxon>Pseudomonadati</taxon>
        <taxon>Pseudomonadota</taxon>
        <taxon>Gammaproteobacteria</taxon>
        <taxon>Legionellales</taxon>
        <taxon>Coxiellaceae</taxon>
        <taxon>Coxiella</taxon>
    </lineage>
</organism>
<protein>
    <recommendedName>
        <fullName evidence="1">Glutamyl-tRNA(Gln) amidotransferase subunit A</fullName>
        <shortName evidence="1">Glu-ADT subunit A</shortName>
        <ecNumber evidence="1">6.3.5.7</ecNumber>
    </recommendedName>
</protein>
<gene>
    <name evidence="1" type="primary">gatA</name>
    <name type="ordered locus">CbuG_0534</name>
</gene>
<reference key="1">
    <citation type="journal article" date="2009" name="Infect. Immun.">
        <title>Comparative genomics reveal extensive transposon-mediated genomic plasticity and diversity among potential effector proteins within the genus Coxiella.</title>
        <authorList>
            <person name="Beare P.A."/>
            <person name="Unsworth N."/>
            <person name="Andoh M."/>
            <person name="Voth D.E."/>
            <person name="Omsland A."/>
            <person name="Gilk S.D."/>
            <person name="Williams K.P."/>
            <person name="Sobral B.W."/>
            <person name="Kupko J.J. III"/>
            <person name="Porcella S.F."/>
            <person name="Samuel J.E."/>
            <person name="Heinzen R.A."/>
        </authorList>
    </citation>
    <scope>NUCLEOTIDE SEQUENCE [LARGE SCALE GENOMIC DNA]</scope>
    <source>
        <strain>CbuG_Q212</strain>
    </source>
</reference>
<evidence type="ECO:0000255" key="1">
    <source>
        <dbReference type="HAMAP-Rule" id="MF_00120"/>
    </source>
</evidence>